<organism>
    <name type="scientific">Rhizobium etli (strain CIAT 652)</name>
    <dbReference type="NCBI Taxonomy" id="491916"/>
    <lineage>
        <taxon>Bacteria</taxon>
        <taxon>Pseudomonadati</taxon>
        <taxon>Pseudomonadota</taxon>
        <taxon>Alphaproteobacteria</taxon>
        <taxon>Hyphomicrobiales</taxon>
        <taxon>Rhizobiaceae</taxon>
        <taxon>Rhizobium/Agrobacterium group</taxon>
        <taxon>Rhizobium</taxon>
    </lineage>
</organism>
<feature type="chain" id="PRO_0000370130" description="3-deoxy-manno-octulosonate cytidylyltransferase">
    <location>
        <begin position="1"/>
        <end position="251"/>
    </location>
</feature>
<protein>
    <recommendedName>
        <fullName evidence="1">3-deoxy-manno-octulosonate cytidylyltransferase</fullName>
        <ecNumber evidence="1">2.7.7.38</ecNumber>
    </recommendedName>
    <alternativeName>
        <fullName evidence="1">CMP-2-keto-3-deoxyoctulosonic acid synthase</fullName>
        <shortName evidence="1">CKS</shortName>
        <shortName evidence="1">CMP-KDO synthase</shortName>
    </alternativeName>
</protein>
<name>KDSB_RHIE6</name>
<keyword id="KW-0963">Cytoplasm</keyword>
<keyword id="KW-0448">Lipopolysaccharide biosynthesis</keyword>
<keyword id="KW-0548">Nucleotidyltransferase</keyword>
<keyword id="KW-0808">Transferase</keyword>
<comment type="function">
    <text evidence="1">Activates KDO (a required 8-carbon sugar) for incorporation into bacterial lipopolysaccharide in Gram-negative bacteria.</text>
</comment>
<comment type="catalytic activity">
    <reaction evidence="1">
        <text>3-deoxy-alpha-D-manno-oct-2-ulosonate + CTP = CMP-3-deoxy-beta-D-manno-octulosonate + diphosphate</text>
        <dbReference type="Rhea" id="RHEA:23448"/>
        <dbReference type="ChEBI" id="CHEBI:33019"/>
        <dbReference type="ChEBI" id="CHEBI:37563"/>
        <dbReference type="ChEBI" id="CHEBI:85986"/>
        <dbReference type="ChEBI" id="CHEBI:85987"/>
        <dbReference type="EC" id="2.7.7.38"/>
    </reaction>
</comment>
<comment type="pathway">
    <text evidence="1">Nucleotide-sugar biosynthesis; CMP-3-deoxy-D-manno-octulosonate biosynthesis; CMP-3-deoxy-D-manno-octulosonate from 3-deoxy-D-manno-octulosonate and CTP: step 1/1.</text>
</comment>
<comment type="pathway">
    <text evidence="1">Bacterial outer membrane biogenesis; lipopolysaccharide biosynthesis.</text>
</comment>
<comment type="subcellular location">
    <subcellularLocation>
        <location evidence="1">Cytoplasm</location>
    </subcellularLocation>
</comment>
<comment type="similarity">
    <text evidence="1">Belongs to the KdsB family.</text>
</comment>
<evidence type="ECO:0000255" key="1">
    <source>
        <dbReference type="HAMAP-Rule" id="MF_00057"/>
    </source>
</evidence>
<gene>
    <name evidence="1" type="primary">kdsB</name>
    <name type="ordered locus">RHECIAT_CH0000170</name>
</gene>
<reference key="1">
    <citation type="journal article" date="2010" name="Appl. Environ. Microbiol.">
        <title>Conserved symbiotic plasmid DNA sequences in the multireplicon pangenomic structure of Rhizobium etli.</title>
        <authorList>
            <person name="Gonzalez V."/>
            <person name="Acosta J.L."/>
            <person name="Santamaria R.I."/>
            <person name="Bustos P."/>
            <person name="Fernandez J.L."/>
            <person name="Hernandez Gonzalez I.L."/>
            <person name="Diaz R."/>
            <person name="Flores M."/>
            <person name="Palacios R."/>
            <person name="Mora J."/>
            <person name="Davila G."/>
        </authorList>
    </citation>
    <scope>NUCLEOTIDE SEQUENCE [LARGE SCALE GENOMIC DNA]</scope>
    <source>
        <strain>CIAT 652</strain>
    </source>
</reference>
<sequence>MSDSNLDEVLVLIPARMASTRLPGKPLADICGLPMIVQVAMRAKEAAIGRVVVAVDDQQVFDAVSAAGFDVVMTSSDHQSGSDRIFEALTKVDPDGKAKFIVNVQGDLPTIDPQTVRAALRPLENEAVDIGTLTTEIDDEDDKTAPHIVKIVGSPVSDTRLHALYFTRATAPHGKGPLYHHIGLYAYRRAALERFVSLGPSTLERRESLEQLRALEAGMRIDVEIVDTVPLGVDTPADLEKARRILSARTG</sequence>
<dbReference type="EC" id="2.7.7.38" evidence="1"/>
<dbReference type="EMBL" id="CP001074">
    <property type="protein sequence ID" value="ACE89166.1"/>
    <property type="molecule type" value="Genomic_DNA"/>
</dbReference>
<dbReference type="SMR" id="B3PXG0"/>
<dbReference type="KEGG" id="rec:RHECIAT_CH0000170"/>
<dbReference type="eggNOG" id="COG1212">
    <property type="taxonomic scope" value="Bacteria"/>
</dbReference>
<dbReference type="HOGENOM" id="CLU_065038_0_1_5"/>
<dbReference type="UniPathway" id="UPA00030"/>
<dbReference type="UniPathway" id="UPA00358">
    <property type="reaction ID" value="UER00476"/>
</dbReference>
<dbReference type="Proteomes" id="UP000008817">
    <property type="component" value="Chromosome"/>
</dbReference>
<dbReference type="GO" id="GO:0005829">
    <property type="term" value="C:cytosol"/>
    <property type="evidence" value="ECO:0007669"/>
    <property type="project" value="TreeGrafter"/>
</dbReference>
<dbReference type="GO" id="GO:0008690">
    <property type="term" value="F:3-deoxy-manno-octulosonate cytidylyltransferase activity"/>
    <property type="evidence" value="ECO:0007669"/>
    <property type="project" value="UniProtKB-UniRule"/>
</dbReference>
<dbReference type="GO" id="GO:0033468">
    <property type="term" value="P:CMP-keto-3-deoxy-D-manno-octulosonic acid biosynthetic process"/>
    <property type="evidence" value="ECO:0007669"/>
    <property type="project" value="UniProtKB-UniRule"/>
</dbReference>
<dbReference type="GO" id="GO:0009103">
    <property type="term" value="P:lipopolysaccharide biosynthetic process"/>
    <property type="evidence" value="ECO:0007669"/>
    <property type="project" value="UniProtKB-UniRule"/>
</dbReference>
<dbReference type="CDD" id="cd02517">
    <property type="entry name" value="CMP-KDO-Synthetase"/>
    <property type="match status" value="1"/>
</dbReference>
<dbReference type="Gene3D" id="3.90.550.10">
    <property type="entry name" value="Spore Coat Polysaccharide Biosynthesis Protein SpsA, Chain A"/>
    <property type="match status" value="1"/>
</dbReference>
<dbReference type="HAMAP" id="MF_00057">
    <property type="entry name" value="KdsB"/>
    <property type="match status" value="1"/>
</dbReference>
<dbReference type="InterPro" id="IPR003329">
    <property type="entry name" value="Cytidylyl_trans"/>
</dbReference>
<dbReference type="InterPro" id="IPR004528">
    <property type="entry name" value="KdsB"/>
</dbReference>
<dbReference type="InterPro" id="IPR029044">
    <property type="entry name" value="Nucleotide-diphossugar_trans"/>
</dbReference>
<dbReference type="NCBIfam" id="TIGR00466">
    <property type="entry name" value="kdsB"/>
    <property type="match status" value="1"/>
</dbReference>
<dbReference type="NCBIfam" id="NF003948">
    <property type="entry name" value="PRK05450.1-1"/>
    <property type="match status" value="1"/>
</dbReference>
<dbReference type="NCBIfam" id="NF003952">
    <property type="entry name" value="PRK05450.1-5"/>
    <property type="match status" value="1"/>
</dbReference>
<dbReference type="PANTHER" id="PTHR42866">
    <property type="entry name" value="3-DEOXY-MANNO-OCTULOSONATE CYTIDYLYLTRANSFERASE"/>
    <property type="match status" value="1"/>
</dbReference>
<dbReference type="PANTHER" id="PTHR42866:SF2">
    <property type="entry name" value="3-DEOXY-MANNO-OCTULOSONATE CYTIDYLYLTRANSFERASE, MITOCHONDRIAL"/>
    <property type="match status" value="1"/>
</dbReference>
<dbReference type="Pfam" id="PF02348">
    <property type="entry name" value="CTP_transf_3"/>
    <property type="match status" value="1"/>
</dbReference>
<dbReference type="SUPFAM" id="SSF53448">
    <property type="entry name" value="Nucleotide-diphospho-sugar transferases"/>
    <property type="match status" value="1"/>
</dbReference>
<proteinExistence type="inferred from homology"/>
<accession>B3PXG0</accession>